<protein>
    <recommendedName>
        <fullName evidence="4">L-amino-acid oxidase ACTX-8</fullName>
        <shortName>LAAO</shortName>
        <shortName evidence="4">LAO</shortName>
        <ecNumber evidence="2">1.4.3.2</ecNumber>
    </recommendedName>
</protein>
<organism>
    <name type="scientific">Deinagkistrodon acutus</name>
    <name type="common">Hundred-pace snake</name>
    <name type="synonym">Agkistrodon acutus</name>
    <dbReference type="NCBI Taxonomy" id="36307"/>
    <lineage>
        <taxon>Eukaryota</taxon>
        <taxon>Metazoa</taxon>
        <taxon>Chordata</taxon>
        <taxon>Craniata</taxon>
        <taxon>Vertebrata</taxon>
        <taxon>Euteleostomi</taxon>
        <taxon>Lepidosauria</taxon>
        <taxon>Squamata</taxon>
        <taxon>Bifurcata</taxon>
        <taxon>Unidentata</taxon>
        <taxon>Episquamata</taxon>
        <taxon>Toxicofera</taxon>
        <taxon>Serpentes</taxon>
        <taxon>Colubroidea</taxon>
        <taxon>Viperidae</taxon>
        <taxon>Crotalinae</taxon>
        <taxon>Deinagkistrodon</taxon>
    </lineage>
</organism>
<reference key="1">
    <citation type="journal article" date="2007" name="Life Sci.">
        <title>ACTX-8, a cytotoxic L-amino acid oxidase isolated from Agkistrodon acutus snake venom, induces apoptosis in Hela cervical cancer cells.</title>
        <authorList>
            <person name="Zhang L."/>
            <person name="Wei L.J."/>
        </authorList>
    </citation>
    <scope>PROTEIN SEQUENCE</scope>
    <scope>FUNCTION IN INDUCTION OF APOPTOSIS</scope>
    <scope>SUBCELLULAR LOCATION</scope>
    <source>
        <tissue>Venom</tissue>
    </source>
</reference>
<sequence length="19" mass="2400">ADDRNPLEEFRENNYEEFL</sequence>
<proteinExistence type="evidence at protein level"/>
<feature type="chain" id="PRO_0000412592" description="L-amino-acid oxidase ACTX-8">
    <location>
        <begin position="1"/>
        <end position="19" status="greater than"/>
    </location>
</feature>
<feature type="non-terminal residue" evidence="4">
    <location>
        <position position="19"/>
    </location>
</feature>
<comment type="function">
    <text evidence="1 3">Catalyzes an oxidative deamination of predominantly hydrophobic and aromatic L-amino acids, thus producing hydrogen peroxide that may contribute to the diverse toxic effects of this enzyme. Exhibits diverse biological activities, such as hemorrhage, hemolysis, edema, apoptosis of vascular endothelial cells or tumor cell lines, antibacterial and antiparasitic activities, as well as regulation of platelet aggregation. Its effect on platelets is controversial, since it either induces aggregation or inhibits agonist-induced aggregation. These different effects are probably due to different experimental conditions (By similarity). Induces apoptosis in HeLa cervical cancer cells. Both the caspase-dependent and the mitochondrial pathways seem to be involved in apoptosis (PubMed:17275856).</text>
</comment>
<comment type="catalytic activity">
    <reaction evidence="2">
        <text>an L-alpha-amino acid + O2 + H2O = a 2-oxocarboxylate + H2O2 + NH4(+)</text>
        <dbReference type="Rhea" id="RHEA:13781"/>
        <dbReference type="ChEBI" id="CHEBI:15377"/>
        <dbReference type="ChEBI" id="CHEBI:15379"/>
        <dbReference type="ChEBI" id="CHEBI:16240"/>
        <dbReference type="ChEBI" id="CHEBI:28938"/>
        <dbReference type="ChEBI" id="CHEBI:35179"/>
        <dbReference type="ChEBI" id="CHEBI:59869"/>
        <dbReference type="EC" id="1.4.3.2"/>
    </reaction>
</comment>
<comment type="cofactor">
    <cofactor evidence="2">
        <name>FAD</name>
        <dbReference type="ChEBI" id="CHEBI:57692"/>
    </cofactor>
</comment>
<comment type="subunit">
    <text evidence="2">Homodimer; non-covalently linked.</text>
</comment>
<comment type="subcellular location">
    <subcellularLocation>
        <location evidence="3">Secreted</location>
    </subcellularLocation>
</comment>
<comment type="tissue specificity">
    <text evidence="6">Expressed by the venom gland.</text>
</comment>
<comment type="PTM">
    <text evidence="2">Contains 2 disulfide bonds.</text>
</comment>
<comment type="PTM">
    <text evidence="2">N-glycosylated.</text>
</comment>
<comment type="similarity">
    <text evidence="5">Belongs to the flavin monoamine oxidase family. FIG1 subfamily.</text>
</comment>
<accession>P0DI85</accession>
<dbReference type="EC" id="1.4.3.2" evidence="2"/>
<dbReference type="GO" id="GO:0005576">
    <property type="term" value="C:extracellular region"/>
    <property type="evidence" value="ECO:0007669"/>
    <property type="project" value="UniProtKB-SubCell"/>
</dbReference>
<dbReference type="GO" id="GO:0001716">
    <property type="term" value="F:L-amino-acid oxidase activity"/>
    <property type="evidence" value="ECO:0007669"/>
    <property type="project" value="UniProtKB-EC"/>
</dbReference>
<dbReference type="GO" id="GO:0090729">
    <property type="term" value="F:toxin activity"/>
    <property type="evidence" value="ECO:0007669"/>
    <property type="project" value="UniProtKB-KW"/>
</dbReference>
<dbReference type="GO" id="GO:0006915">
    <property type="term" value="P:apoptotic process"/>
    <property type="evidence" value="ECO:0007669"/>
    <property type="project" value="UniProtKB-KW"/>
</dbReference>
<dbReference type="GO" id="GO:0042742">
    <property type="term" value="P:defense response to bacterium"/>
    <property type="evidence" value="ECO:0007669"/>
    <property type="project" value="UniProtKB-KW"/>
</dbReference>
<dbReference type="GO" id="GO:0031640">
    <property type="term" value="P:killing of cells of another organism"/>
    <property type="evidence" value="ECO:0007669"/>
    <property type="project" value="UniProtKB-KW"/>
</dbReference>
<evidence type="ECO:0000250" key="1"/>
<evidence type="ECO:0000250" key="2">
    <source>
        <dbReference type="UniProtKB" id="P81382"/>
    </source>
</evidence>
<evidence type="ECO:0000269" key="3">
    <source>
    </source>
</evidence>
<evidence type="ECO:0000303" key="4">
    <source>
    </source>
</evidence>
<evidence type="ECO:0000305" key="5"/>
<evidence type="ECO:0000305" key="6">
    <source>
    </source>
</evidence>
<name>OXLA8_DEIAC</name>
<keyword id="KW-0044">Antibiotic</keyword>
<keyword id="KW-0929">Antimicrobial</keyword>
<keyword id="KW-0053">Apoptosis</keyword>
<keyword id="KW-0204">Cytolysis</keyword>
<keyword id="KW-0903">Direct protein sequencing</keyword>
<keyword id="KW-1015">Disulfide bond</keyword>
<keyword id="KW-0274">FAD</keyword>
<keyword id="KW-0285">Flavoprotein</keyword>
<keyword id="KW-0325">Glycoprotein</keyword>
<keyword id="KW-0354">Hemolysis</keyword>
<keyword id="KW-1199">Hemostasis impairing toxin</keyword>
<keyword id="KW-0560">Oxidoreductase</keyword>
<keyword id="KW-0964">Secreted</keyword>
<keyword id="KW-0800">Toxin</keyword>